<comment type="function">
    <text evidence="1">Catalyzes the attachment of alanine to tRNA(Ala) in a two-step reaction: alanine is first activated by ATP to form Ala-AMP and then transferred to the acceptor end of tRNA(Ala). Also edits incorrectly charged Ser-tRNA(Ala) and Gly-tRNA(Ala) via its editing domain.</text>
</comment>
<comment type="catalytic activity">
    <reaction evidence="1">
        <text>tRNA(Ala) + L-alanine + ATP = L-alanyl-tRNA(Ala) + AMP + diphosphate</text>
        <dbReference type="Rhea" id="RHEA:12540"/>
        <dbReference type="Rhea" id="RHEA-COMP:9657"/>
        <dbReference type="Rhea" id="RHEA-COMP:9923"/>
        <dbReference type="ChEBI" id="CHEBI:30616"/>
        <dbReference type="ChEBI" id="CHEBI:33019"/>
        <dbReference type="ChEBI" id="CHEBI:57972"/>
        <dbReference type="ChEBI" id="CHEBI:78442"/>
        <dbReference type="ChEBI" id="CHEBI:78497"/>
        <dbReference type="ChEBI" id="CHEBI:456215"/>
        <dbReference type="EC" id="6.1.1.7"/>
    </reaction>
</comment>
<comment type="cofactor">
    <cofactor evidence="1">
        <name>Zn(2+)</name>
        <dbReference type="ChEBI" id="CHEBI:29105"/>
    </cofactor>
    <text evidence="1">Binds 1 zinc ion per subunit.</text>
</comment>
<comment type="subcellular location">
    <subcellularLocation>
        <location evidence="1">Cytoplasm</location>
    </subcellularLocation>
</comment>
<comment type="domain">
    <text evidence="1">Consists of three domains; the N-terminal catalytic domain, the editing domain and the C-terminal C-Ala domain. The editing domain removes incorrectly charged amino acids, while the C-Ala domain, along with tRNA(Ala), serves as a bridge to cooperatively bring together the editing and aminoacylation centers thus stimulating deacylation of misacylated tRNAs.</text>
</comment>
<comment type="similarity">
    <text evidence="1">Belongs to the class-II aminoacyl-tRNA synthetase family.</text>
</comment>
<proteinExistence type="inferred from homology"/>
<gene>
    <name evidence="1" type="primary">alaS</name>
    <name type="ordered locus">GOX1786</name>
</gene>
<evidence type="ECO:0000255" key="1">
    <source>
        <dbReference type="HAMAP-Rule" id="MF_00036"/>
    </source>
</evidence>
<organism>
    <name type="scientific">Gluconobacter oxydans (strain 621H)</name>
    <name type="common">Gluconobacter suboxydans</name>
    <dbReference type="NCBI Taxonomy" id="290633"/>
    <lineage>
        <taxon>Bacteria</taxon>
        <taxon>Pseudomonadati</taxon>
        <taxon>Pseudomonadota</taxon>
        <taxon>Alphaproteobacteria</taxon>
        <taxon>Acetobacterales</taxon>
        <taxon>Acetobacteraceae</taxon>
        <taxon>Gluconobacter</taxon>
    </lineage>
</organism>
<reference key="1">
    <citation type="journal article" date="2005" name="Nat. Biotechnol.">
        <title>Complete genome sequence of the acetic acid bacterium Gluconobacter oxydans.</title>
        <authorList>
            <person name="Prust C."/>
            <person name="Hoffmeister M."/>
            <person name="Liesegang H."/>
            <person name="Wiezer A."/>
            <person name="Fricke W.F."/>
            <person name="Ehrenreich A."/>
            <person name="Gottschalk G."/>
            <person name="Deppenmeier U."/>
        </authorList>
    </citation>
    <scope>NUCLEOTIDE SEQUENCE [LARGE SCALE GENOMIC DNA]</scope>
    <source>
        <strain>621H</strain>
    </source>
</reference>
<dbReference type="EC" id="6.1.1.7" evidence="1"/>
<dbReference type="EMBL" id="CP000009">
    <property type="protein sequence ID" value="AAW61525.1"/>
    <property type="molecule type" value="Genomic_DNA"/>
</dbReference>
<dbReference type="RefSeq" id="WP_011253306.1">
    <property type="nucleotide sequence ID" value="NC_006677.1"/>
</dbReference>
<dbReference type="SMR" id="Q5FQ21"/>
<dbReference type="STRING" id="290633.GOX1786"/>
<dbReference type="KEGG" id="gox:GOX1786"/>
<dbReference type="eggNOG" id="COG0013">
    <property type="taxonomic scope" value="Bacteria"/>
</dbReference>
<dbReference type="HOGENOM" id="CLU_004485_1_1_5"/>
<dbReference type="Proteomes" id="UP000006375">
    <property type="component" value="Chromosome"/>
</dbReference>
<dbReference type="GO" id="GO:0005829">
    <property type="term" value="C:cytosol"/>
    <property type="evidence" value="ECO:0007669"/>
    <property type="project" value="TreeGrafter"/>
</dbReference>
<dbReference type="GO" id="GO:0004813">
    <property type="term" value="F:alanine-tRNA ligase activity"/>
    <property type="evidence" value="ECO:0007669"/>
    <property type="project" value="UniProtKB-UniRule"/>
</dbReference>
<dbReference type="GO" id="GO:0002161">
    <property type="term" value="F:aminoacyl-tRNA deacylase activity"/>
    <property type="evidence" value="ECO:0007669"/>
    <property type="project" value="TreeGrafter"/>
</dbReference>
<dbReference type="GO" id="GO:0005524">
    <property type="term" value="F:ATP binding"/>
    <property type="evidence" value="ECO:0007669"/>
    <property type="project" value="UniProtKB-UniRule"/>
</dbReference>
<dbReference type="GO" id="GO:0000049">
    <property type="term" value="F:tRNA binding"/>
    <property type="evidence" value="ECO:0007669"/>
    <property type="project" value="UniProtKB-KW"/>
</dbReference>
<dbReference type="GO" id="GO:0008270">
    <property type="term" value="F:zinc ion binding"/>
    <property type="evidence" value="ECO:0007669"/>
    <property type="project" value="UniProtKB-UniRule"/>
</dbReference>
<dbReference type="GO" id="GO:0006419">
    <property type="term" value="P:alanyl-tRNA aminoacylation"/>
    <property type="evidence" value="ECO:0007669"/>
    <property type="project" value="UniProtKB-UniRule"/>
</dbReference>
<dbReference type="GO" id="GO:0045892">
    <property type="term" value="P:negative regulation of DNA-templated transcription"/>
    <property type="evidence" value="ECO:0007669"/>
    <property type="project" value="TreeGrafter"/>
</dbReference>
<dbReference type="CDD" id="cd00673">
    <property type="entry name" value="AlaRS_core"/>
    <property type="match status" value="1"/>
</dbReference>
<dbReference type="FunFam" id="3.10.310.40:FF:000001">
    <property type="entry name" value="Alanine--tRNA ligase"/>
    <property type="match status" value="1"/>
</dbReference>
<dbReference type="FunFam" id="3.30.54.20:FF:000001">
    <property type="entry name" value="Alanine--tRNA ligase"/>
    <property type="match status" value="1"/>
</dbReference>
<dbReference type="FunFam" id="3.30.930.10:FF:000004">
    <property type="entry name" value="Alanine--tRNA ligase"/>
    <property type="match status" value="1"/>
</dbReference>
<dbReference type="FunFam" id="3.30.980.10:FF:000004">
    <property type="entry name" value="Alanine--tRNA ligase, cytoplasmic"/>
    <property type="match status" value="1"/>
</dbReference>
<dbReference type="Gene3D" id="2.40.30.130">
    <property type="match status" value="1"/>
</dbReference>
<dbReference type="Gene3D" id="3.10.310.40">
    <property type="match status" value="1"/>
</dbReference>
<dbReference type="Gene3D" id="3.30.54.20">
    <property type="match status" value="1"/>
</dbReference>
<dbReference type="Gene3D" id="6.10.250.550">
    <property type="match status" value="1"/>
</dbReference>
<dbReference type="Gene3D" id="3.30.930.10">
    <property type="entry name" value="Bira Bifunctional Protein, Domain 2"/>
    <property type="match status" value="1"/>
</dbReference>
<dbReference type="Gene3D" id="3.30.980.10">
    <property type="entry name" value="Threonyl-trna Synthetase, Chain A, domain 2"/>
    <property type="match status" value="1"/>
</dbReference>
<dbReference type="HAMAP" id="MF_00036_B">
    <property type="entry name" value="Ala_tRNA_synth_B"/>
    <property type="match status" value="1"/>
</dbReference>
<dbReference type="InterPro" id="IPR045864">
    <property type="entry name" value="aa-tRNA-synth_II/BPL/LPL"/>
</dbReference>
<dbReference type="InterPro" id="IPR002318">
    <property type="entry name" value="Ala-tRNA-lgiase_IIc"/>
</dbReference>
<dbReference type="InterPro" id="IPR018162">
    <property type="entry name" value="Ala-tRNA-ligase_IIc_anticod-bd"/>
</dbReference>
<dbReference type="InterPro" id="IPR018165">
    <property type="entry name" value="Ala-tRNA-synth_IIc_core"/>
</dbReference>
<dbReference type="InterPro" id="IPR018164">
    <property type="entry name" value="Ala-tRNA-synth_IIc_N"/>
</dbReference>
<dbReference type="InterPro" id="IPR050058">
    <property type="entry name" value="Ala-tRNA_ligase"/>
</dbReference>
<dbReference type="InterPro" id="IPR023033">
    <property type="entry name" value="Ala_tRNA_ligase_euk/bac"/>
</dbReference>
<dbReference type="InterPro" id="IPR003156">
    <property type="entry name" value="DHHA1_dom"/>
</dbReference>
<dbReference type="InterPro" id="IPR018163">
    <property type="entry name" value="Thr/Ala-tRNA-synth_IIc_edit"/>
</dbReference>
<dbReference type="InterPro" id="IPR009000">
    <property type="entry name" value="Transl_B-barrel_sf"/>
</dbReference>
<dbReference type="InterPro" id="IPR012947">
    <property type="entry name" value="tRNA_SAD"/>
</dbReference>
<dbReference type="NCBIfam" id="TIGR00344">
    <property type="entry name" value="alaS"/>
    <property type="match status" value="1"/>
</dbReference>
<dbReference type="PANTHER" id="PTHR11777:SF9">
    <property type="entry name" value="ALANINE--TRNA LIGASE, CYTOPLASMIC"/>
    <property type="match status" value="1"/>
</dbReference>
<dbReference type="PANTHER" id="PTHR11777">
    <property type="entry name" value="ALANYL-TRNA SYNTHETASE"/>
    <property type="match status" value="1"/>
</dbReference>
<dbReference type="Pfam" id="PF02272">
    <property type="entry name" value="DHHA1"/>
    <property type="match status" value="1"/>
</dbReference>
<dbReference type="Pfam" id="PF01411">
    <property type="entry name" value="tRNA-synt_2c"/>
    <property type="match status" value="1"/>
</dbReference>
<dbReference type="Pfam" id="PF07973">
    <property type="entry name" value="tRNA_SAD"/>
    <property type="match status" value="1"/>
</dbReference>
<dbReference type="PRINTS" id="PR00980">
    <property type="entry name" value="TRNASYNTHALA"/>
</dbReference>
<dbReference type="SMART" id="SM00863">
    <property type="entry name" value="tRNA_SAD"/>
    <property type="match status" value="1"/>
</dbReference>
<dbReference type="SUPFAM" id="SSF55681">
    <property type="entry name" value="Class II aaRS and biotin synthetases"/>
    <property type="match status" value="1"/>
</dbReference>
<dbReference type="SUPFAM" id="SSF101353">
    <property type="entry name" value="Putative anticodon-binding domain of alanyl-tRNA synthetase (AlaRS)"/>
    <property type="match status" value="1"/>
</dbReference>
<dbReference type="SUPFAM" id="SSF55186">
    <property type="entry name" value="ThrRS/AlaRS common domain"/>
    <property type="match status" value="1"/>
</dbReference>
<dbReference type="SUPFAM" id="SSF50447">
    <property type="entry name" value="Translation proteins"/>
    <property type="match status" value="1"/>
</dbReference>
<dbReference type="PROSITE" id="PS50860">
    <property type="entry name" value="AA_TRNA_LIGASE_II_ALA"/>
    <property type="match status" value="1"/>
</dbReference>
<protein>
    <recommendedName>
        <fullName evidence="1">Alanine--tRNA ligase</fullName>
        <ecNumber evidence="1">6.1.1.7</ecNumber>
    </recommendedName>
    <alternativeName>
        <fullName evidence="1">Alanyl-tRNA synthetase</fullName>
        <shortName evidence="1">AlaRS</shortName>
    </alternativeName>
</protein>
<keyword id="KW-0030">Aminoacyl-tRNA synthetase</keyword>
<keyword id="KW-0067">ATP-binding</keyword>
<keyword id="KW-0963">Cytoplasm</keyword>
<keyword id="KW-0436">Ligase</keyword>
<keyword id="KW-0479">Metal-binding</keyword>
<keyword id="KW-0547">Nucleotide-binding</keyword>
<keyword id="KW-0648">Protein biosynthesis</keyword>
<keyword id="KW-1185">Reference proteome</keyword>
<keyword id="KW-0694">RNA-binding</keyword>
<keyword id="KW-0820">tRNA-binding</keyword>
<keyword id="KW-0862">Zinc</keyword>
<feature type="chain" id="PRO_0000075120" description="Alanine--tRNA ligase">
    <location>
        <begin position="1"/>
        <end position="879"/>
    </location>
</feature>
<feature type="binding site" evidence="1">
    <location>
        <position position="565"/>
    </location>
    <ligand>
        <name>Zn(2+)</name>
        <dbReference type="ChEBI" id="CHEBI:29105"/>
    </ligand>
</feature>
<feature type="binding site" evidence="1">
    <location>
        <position position="569"/>
    </location>
    <ligand>
        <name>Zn(2+)</name>
        <dbReference type="ChEBI" id="CHEBI:29105"/>
    </ligand>
</feature>
<feature type="binding site" evidence="1">
    <location>
        <position position="674"/>
    </location>
    <ligand>
        <name>Zn(2+)</name>
        <dbReference type="ChEBI" id="CHEBI:29105"/>
    </ligand>
</feature>
<feature type="binding site" evidence="1">
    <location>
        <position position="678"/>
    </location>
    <ligand>
        <name>Zn(2+)</name>
        <dbReference type="ChEBI" id="CHEBI:29105"/>
    </ligand>
</feature>
<sequence length="879" mass="95350">MTSTNDIRSAFLEYFGSQGHRIVPSASLVPQNDPTLLFTNAGMVPFKNVFTGQETRPYSRATTAQKVVRAGGKHNDLDNVGYTARHHTFFEMMGNFSFGDYFKPEAIEFAWTLLTRDFGLPKDKLLATVYAEDEDAADLWKKIAGLSDDRIIRIGTSDNFWRMGDTGPCGPCSEIFYDHGDSVFGGPPGSPDEDGDRFVEIWNLVFMQFLDQPDGSRDALPRPSIDTGMGLERFAAIMQGKRDNYDTDTMRALIEASAEIMHQDADGPFKASHRVVADHLRSTAFLIADGVLPSKEGRGYVLRRIMRRAMRHLHIMGAKEPVFYRLLPALIQQMGAAYPELVQHQALIAQTMKGEEERFTALLERGLTLLSDELDRLGDKEALPGDVAFKLYDTFGFPLDLTQDALREKGRTVDEAGFETAMAEQRKRARAAWVGSGDAAAETVWFDARDKHGPSEFLGYVSEKADAEVQGIFRGNDELASAPAGDDTVAILLNQTPFYGESGGQVGDHGTLTAPGVRVEITDTQKRNGDLIVHYGKVVEGTLKPGMAVHAEIDHARRTAVRGHHSATHLLHEALRRQIGTHVTQKGSLNAPERLRFDISQPRPLTDEELAAVEAEVNARIRENAPVETRLMTQEEAVAEGAMALFGEKYGDEVRVVSMGKGDDDRPAYSIELCGGTHVGRVGEIGPFRIVSESGVSAGVRRIEAVCGLAAEALALETESRLKQIADLLKVPVADAASRVAALLEERKSLTAQVSDLQRKLATGEGTSATESINGITLSARDLGDVSPKELKGLAESISKQIASGVVALMSSADGRGSIVIAVTKDLTDRLDAVKLVREASALMGGKGGGGRPDMAQAGGPNADSDAVFAMLRKTLEAA</sequence>
<name>SYA_GLUOX</name>
<accession>Q5FQ21</accession>